<proteinExistence type="evidence at protein level"/>
<sequence>MTGARASAAEQRRAGRSGQARAAERAAGMSGAGRALAALLLAASVLSAALLAPGGSSGRDAQAAPPRDLDKKRHAELKMDQALLLIHNELLWTNLTVYWKSECCYHCLFQVLVNVPQSPKAGKPSAAAASVSTQHGSILQLNDTLEEKEVCRLEYRFGEFGNYSLLVKNIHNGVSEIACDLAVNEDPVDSNLPVSIAFLIGLAVIIVISFLRLLLSLDDFNNWISKAISSRETDRLINSELGSPSRTDPLDGDVQPATWRLSALPPRLRSVDTFRGIALILMVFVNYGGGKYWYFKHASWNGLTVADLVFPWFVFIMGSSIFLSMTSILQRGCSKFRLLGKIAWRSFLLICIGIIIVNPNYCLGPLSWDKVRIPGVLQRLGVTYFVVAVLELLFAKPVPEHCASERSCLSLRDITSSWPQWLLILVLEGLWLGLTFLLPVPGCPTGYLGPGGIGDFGKYPNCTGGAAGYIDRLLLGDDHLYQHPSSAVLYHTEVAYDPEGILGTINSIVMAFLGVQAGKILLYYKARTKDILIRFTAWCCILGLISVALTKVSENEGFIPVNKNLWSLSYVTTLSSFAFFILLVLYPVVDVKGLWTGTPFFYPGMNSILVYVGHEVFENYFPFQWKLKDNQSHKEHLTQNIVATALWVLIAYILYRKKIFWKI</sequence>
<reference key="1">
    <citation type="journal article" date="2004" name="Nat. Genet.">
        <title>Complete sequencing and characterization of 21,243 full-length human cDNAs.</title>
        <authorList>
            <person name="Ota T."/>
            <person name="Suzuki Y."/>
            <person name="Nishikawa T."/>
            <person name="Otsuki T."/>
            <person name="Sugiyama T."/>
            <person name="Irie R."/>
            <person name="Wakamatsu A."/>
            <person name="Hayashi K."/>
            <person name="Sato H."/>
            <person name="Nagai K."/>
            <person name="Kimura K."/>
            <person name="Makita H."/>
            <person name="Sekine M."/>
            <person name="Obayashi M."/>
            <person name="Nishi T."/>
            <person name="Shibahara T."/>
            <person name="Tanaka T."/>
            <person name="Ishii S."/>
            <person name="Yamamoto J."/>
            <person name="Saito K."/>
            <person name="Kawai Y."/>
            <person name="Isono Y."/>
            <person name="Nakamura Y."/>
            <person name="Nagahari K."/>
            <person name="Murakami K."/>
            <person name="Yasuda T."/>
            <person name="Iwayanagi T."/>
            <person name="Wagatsuma M."/>
            <person name="Shiratori A."/>
            <person name="Sudo H."/>
            <person name="Hosoiri T."/>
            <person name="Kaku Y."/>
            <person name="Kodaira H."/>
            <person name="Kondo H."/>
            <person name="Sugawara M."/>
            <person name="Takahashi M."/>
            <person name="Kanda K."/>
            <person name="Yokoi T."/>
            <person name="Furuya T."/>
            <person name="Kikkawa E."/>
            <person name="Omura Y."/>
            <person name="Abe K."/>
            <person name="Kamihara K."/>
            <person name="Katsuta N."/>
            <person name="Sato K."/>
            <person name="Tanikawa M."/>
            <person name="Yamazaki M."/>
            <person name="Ninomiya K."/>
            <person name="Ishibashi T."/>
            <person name="Yamashita H."/>
            <person name="Murakawa K."/>
            <person name="Fujimori K."/>
            <person name="Tanai H."/>
            <person name="Kimata M."/>
            <person name="Watanabe M."/>
            <person name="Hiraoka S."/>
            <person name="Chiba Y."/>
            <person name="Ishida S."/>
            <person name="Ono Y."/>
            <person name="Takiguchi S."/>
            <person name="Watanabe S."/>
            <person name="Yosida M."/>
            <person name="Hotuta T."/>
            <person name="Kusano J."/>
            <person name="Kanehori K."/>
            <person name="Takahashi-Fujii A."/>
            <person name="Hara H."/>
            <person name="Tanase T.-O."/>
            <person name="Nomura Y."/>
            <person name="Togiya S."/>
            <person name="Komai F."/>
            <person name="Hara R."/>
            <person name="Takeuchi K."/>
            <person name="Arita M."/>
            <person name="Imose N."/>
            <person name="Musashino K."/>
            <person name="Yuuki H."/>
            <person name="Oshima A."/>
            <person name="Sasaki N."/>
            <person name="Aotsuka S."/>
            <person name="Yoshikawa Y."/>
            <person name="Matsunawa H."/>
            <person name="Ichihara T."/>
            <person name="Shiohata N."/>
            <person name="Sano S."/>
            <person name="Moriya S."/>
            <person name="Momiyama H."/>
            <person name="Satoh N."/>
            <person name="Takami S."/>
            <person name="Terashima Y."/>
            <person name="Suzuki O."/>
            <person name="Nakagawa S."/>
            <person name="Senoh A."/>
            <person name="Mizoguchi H."/>
            <person name="Goto Y."/>
            <person name="Shimizu F."/>
            <person name="Wakebe H."/>
            <person name="Hishigaki H."/>
            <person name="Watanabe T."/>
            <person name="Sugiyama A."/>
            <person name="Takemoto M."/>
            <person name="Kawakami B."/>
            <person name="Yamazaki M."/>
            <person name="Watanabe K."/>
            <person name="Kumagai A."/>
            <person name="Itakura S."/>
            <person name="Fukuzumi Y."/>
            <person name="Fujimori Y."/>
            <person name="Komiyama M."/>
            <person name="Tashiro H."/>
            <person name="Tanigami A."/>
            <person name="Fujiwara T."/>
            <person name="Ono T."/>
            <person name="Yamada K."/>
            <person name="Fujii Y."/>
            <person name="Ozaki K."/>
            <person name="Hirao M."/>
            <person name="Ohmori Y."/>
            <person name="Kawabata A."/>
            <person name="Hikiji T."/>
            <person name="Kobatake N."/>
            <person name="Inagaki H."/>
            <person name="Ikema Y."/>
            <person name="Okamoto S."/>
            <person name="Okitani R."/>
            <person name="Kawakami T."/>
            <person name="Noguchi S."/>
            <person name="Itoh T."/>
            <person name="Shigeta K."/>
            <person name="Senba T."/>
            <person name="Matsumura K."/>
            <person name="Nakajima Y."/>
            <person name="Mizuno T."/>
            <person name="Morinaga M."/>
            <person name="Sasaki M."/>
            <person name="Togashi T."/>
            <person name="Oyama M."/>
            <person name="Hata H."/>
            <person name="Watanabe M."/>
            <person name="Komatsu T."/>
            <person name="Mizushima-Sugano J."/>
            <person name="Satoh T."/>
            <person name="Shirai Y."/>
            <person name="Takahashi Y."/>
            <person name="Nakagawa K."/>
            <person name="Okumura K."/>
            <person name="Nagase T."/>
            <person name="Nomura N."/>
            <person name="Kikuchi H."/>
            <person name="Masuho Y."/>
            <person name="Yamashita R."/>
            <person name="Nakai K."/>
            <person name="Yada T."/>
            <person name="Nakamura Y."/>
            <person name="Ohara O."/>
            <person name="Isogai T."/>
            <person name="Sugano S."/>
        </authorList>
    </citation>
    <scope>NUCLEOTIDE SEQUENCE [LARGE SCALE MRNA] (ISOFORM 2)</scope>
    <source>
        <tissue>Trachea</tissue>
    </source>
</reference>
<reference key="2">
    <citation type="journal article" date="2006" name="Nature">
        <title>DNA sequence and analysis of human chromosome 8.</title>
        <authorList>
            <person name="Nusbaum C."/>
            <person name="Mikkelsen T.S."/>
            <person name="Zody M.C."/>
            <person name="Asakawa S."/>
            <person name="Taudien S."/>
            <person name="Garber M."/>
            <person name="Kodira C.D."/>
            <person name="Schueler M.G."/>
            <person name="Shimizu A."/>
            <person name="Whittaker C.A."/>
            <person name="Chang J.L."/>
            <person name="Cuomo C.A."/>
            <person name="Dewar K."/>
            <person name="FitzGerald M.G."/>
            <person name="Yang X."/>
            <person name="Allen N.R."/>
            <person name="Anderson S."/>
            <person name="Asakawa T."/>
            <person name="Blechschmidt K."/>
            <person name="Bloom T."/>
            <person name="Borowsky M.L."/>
            <person name="Butler J."/>
            <person name="Cook A."/>
            <person name="Corum B."/>
            <person name="DeArellano K."/>
            <person name="DeCaprio D."/>
            <person name="Dooley K.T."/>
            <person name="Dorris L. III"/>
            <person name="Engels R."/>
            <person name="Gloeckner G."/>
            <person name="Hafez N."/>
            <person name="Hagopian D.S."/>
            <person name="Hall J.L."/>
            <person name="Ishikawa S.K."/>
            <person name="Jaffe D.B."/>
            <person name="Kamat A."/>
            <person name="Kudoh J."/>
            <person name="Lehmann R."/>
            <person name="Lokitsang T."/>
            <person name="Macdonald P."/>
            <person name="Major J.E."/>
            <person name="Matthews C.D."/>
            <person name="Mauceli E."/>
            <person name="Menzel U."/>
            <person name="Mihalev A.H."/>
            <person name="Minoshima S."/>
            <person name="Murayama Y."/>
            <person name="Naylor J.W."/>
            <person name="Nicol R."/>
            <person name="Nguyen C."/>
            <person name="O'Leary S.B."/>
            <person name="O'Neill K."/>
            <person name="Parker S.C.J."/>
            <person name="Polley A."/>
            <person name="Raymond C.K."/>
            <person name="Reichwald K."/>
            <person name="Rodriguez J."/>
            <person name="Sasaki T."/>
            <person name="Schilhabel M."/>
            <person name="Siddiqui R."/>
            <person name="Smith C.L."/>
            <person name="Sneddon T.P."/>
            <person name="Talamas J.A."/>
            <person name="Tenzin P."/>
            <person name="Topham K."/>
            <person name="Venkataraman V."/>
            <person name="Wen G."/>
            <person name="Yamazaki S."/>
            <person name="Young S.K."/>
            <person name="Zeng Q."/>
            <person name="Zimmer A.R."/>
            <person name="Rosenthal A."/>
            <person name="Birren B.W."/>
            <person name="Platzer M."/>
            <person name="Shimizu N."/>
            <person name="Lander E.S."/>
        </authorList>
    </citation>
    <scope>NUCLEOTIDE SEQUENCE [LARGE SCALE GENOMIC DNA]</scope>
</reference>
<reference key="3">
    <citation type="journal article" date="2007" name="BMC Genomics">
        <title>The full-ORF clone resource of the German cDNA consortium.</title>
        <authorList>
            <person name="Bechtel S."/>
            <person name="Rosenfelder H."/>
            <person name="Duda A."/>
            <person name="Schmidt C.P."/>
            <person name="Ernst U."/>
            <person name="Wellenreuther R."/>
            <person name="Mehrle A."/>
            <person name="Schuster C."/>
            <person name="Bahr A."/>
            <person name="Bloecker H."/>
            <person name="Heubner D."/>
            <person name="Hoerlein A."/>
            <person name="Michel G."/>
            <person name="Wedler H."/>
            <person name="Koehrer K."/>
            <person name="Ottenwaelder B."/>
            <person name="Poustka A."/>
            <person name="Wiemann S."/>
            <person name="Schupp I."/>
        </authorList>
    </citation>
    <scope>NUCLEOTIDE SEQUENCE [LARGE SCALE MRNA] OF 265-663 (ISOFORMS 1/2)</scope>
    <source>
        <tissue>Uterus</tissue>
    </source>
</reference>
<reference key="4">
    <citation type="journal article" date="2006" name="Am. J. Hum. Genet.">
        <title>Identification of the gene encoding the enzyme deficient in mucopolysaccharidosis IIIC (Sanfilippo disease type C).</title>
        <authorList>
            <person name="Fan X."/>
            <person name="Zhang H."/>
            <person name="Zhang S."/>
            <person name="Bagshaw R.D."/>
            <person name="Tropak M.B."/>
            <person name="Callahan J.W."/>
            <person name="Mahuran D.J."/>
        </authorList>
    </citation>
    <scope>INVOLVEMENT IN MPS3C</scope>
    <scope>FUNCTION</scope>
    <scope>CATALYTIC ACTIVITY</scope>
    <scope>SUBCELLULAR LOCATION</scope>
    <scope>TISSUE SPECIFICITY</scope>
</reference>
<reference key="5">
    <citation type="journal article" date="2007" name="Traffic">
        <title>Integral and associated lysosomal membrane proteins.</title>
        <authorList>
            <person name="Schroeder B."/>
            <person name="Wrocklage C."/>
            <person name="Pan C."/>
            <person name="Jaeger R."/>
            <person name="Koesters B."/>
            <person name="Schaefer H."/>
            <person name="Elsaesser H.-P."/>
            <person name="Mann M."/>
            <person name="Hasilik A."/>
        </authorList>
    </citation>
    <scope>SUBCELLULAR LOCATION [LARGE SCALE ANALYSIS]</scope>
    <source>
        <tissue>Placenta</tissue>
    </source>
</reference>
<reference key="6">
    <citation type="journal article" date="2008" name="Proc. Natl. Acad. Sci. U.S.A.">
        <title>A quantitative atlas of mitotic phosphorylation.</title>
        <authorList>
            <person name="Dephoure N."/>
            <person name="Zhou C."/>
            <person name="Villen J."/>
            <person name="Beausoleil S.A."/>
            <person name="Bakalarski C.E."/>
            <person name="Elledge S.J."/>
            <person name="Gygi S.P."/>
        </authorList>
    </citation>
    <scope>IDENTIFICATION BY MASS SPECTROMETRY [LARGE SCALE ANALYSIS]</scope>
    <source>
        <tissue>Cervix carcinoma</tissue>
    </source>
</reference>
<reference key="7">
    <citation type="journal article" date="2009" name="J. Proteome Res.">
        <title>Glycoproteomics analysis of human liver tissue by combination of multiple enzyme digestion and hydrazide chemistry.</title>
        <authorList>
            <person name="Chen R."/>
            <person name="Jiang X."/>
            <person name="Sun D."/>
            <person name="Han G."/>
            <person name="Wang F."/>
            <person name="Ye M."/>
            <person name="Wang L."/>
            <person name="Zou H."/>
        </authorList>
    </citation>
    <scope>GLYCOSYLATION [LARGE SCALE ANALYSIS] AT ASN-142</scope>
    <source>
        <tissue>Liver</tissue>
    </source>
</reference>
<reference key="8">
    <citation type="journal article" date="2009" name="PLoS ONE">
        <title>Protein misfolding as an underlying molecular defect in mucopolysaccharidosis III type C.</title>
        <authorList>
            <person name="Feldhammer M."/>
            <person name="Durand S."/>
            <person name="Pshezhetsky A.V."/>
        </authorList>
    </citation>
    <scope>FUNCTION</scope>
    <scope>GLYCOSYLATION</scope>
    <scope>CHARACTERIZATION OF VARIANTS MPS3C LEU-509 AND THR-643</scope>
    <scope>CHARACTERIZATION OF VARIANTS PHE-104; PRO-165; GLN-265; ARG-290; LYS-301; LEU-311; HIS-372; CYS-431; SER-452; LYS-499; LYS-510; GLU-517; PHE-546; GLN-551; CYS-567; LEU-569; VAL-590 AND LEU-599</scope>
</reference>
<reference key="9">
    <citation type="journal article" date="2010" name="J. Biol. Chem.">
        <title>Analysis of the biogenesis of heparan sulfate acetyl-CoA:alpha-glucosaminide N-acetyltransferase provides insights into the mechanism underlying its complete deficiency in mucopolysaccharidosis IIIC.</title>
        <authorList>
            <person name="Durand S."/>
            <person name="Feldhammer M."/>
            <person name="Bonneil E."/>
            <person name="Thibault P."/>
            <person name="Pshezhetsky A.V."/>
        </authorList>
    </citation>
    <scope>FUNCTION</scope>
    <scope>ACTIVE SITE</scope>
    <scope>ALTERNATIVE INITIATION (ISOFORMS 1 AND 2)</scope>
    <scope>SUBUNIT</scope>
    <scope>CHARACTERIZATION OF VARIANT PHE-104</scope>
    <scope>MUTAGENESIS OF CYS-107; CYS-151; CYS-179; LEU-236; ILE-237; HIS-297; CYS-333; CYS-402; CYS-462; HIS-479 AND HIS-633</scope>
    <scope>IDENTIFICATION BY MASS SPECTROMETRY</scope>
</reference>
<reference key="10">
    <citation type="journal article" date="2010" name="Sci. Signal.">
        <title>Quantitative phosphoproteomics reveals widespread full phosphorylation site occupancy during mitosis.</title>
        <authorList>
            <person name="Olsen J.V."/>
            <person name="Vermeulen M."/>
            <person name="Santamaria A."/>
            <person name="Kumar C."/>
            <person name="Miller M.L."/>
            <person name="Jensen L.J."/>
            <person name="Gnad F."/>
            <person name="Cox J."/>
            <person name="Jensen T.S."/>
            <person name="Nigg E.A."/>
            <person name="Brunak S."/>
            <person name="Mann M."/>
        </authorList>
    </citation>
    <scope>PHOSPHORYLATION [LARGE SCALE ANALYSIS] AT SER-245</scope>
    <scope>IDENTIFICATION BY MASS SPECTROMETRY [LARGE SCALE ANALYSIS]</scope>
    <source>
        <tissue>Cervix carcinoma</tissue>
    </source>
</reference>
<reference key="11">
    <citation type="journal article" date="2013" name="J. Proteome Res.">
        <title>Toward a comprehensive characterization of a human cancer cell phosphoproteome.</title>
        <authorList>
            <person name="Zhou H."/>
            <person name="Di Palma S."/>
            <person name="Preisinger C."/>
            <person name="Peng M."/>
            <person name="Polat A.N."/>
            <person name="Heck A.J."/>
            <person name="Mohammed S."/>
        </authorList>
    </citation>
    <scope>PHOSPHORYLATION [LARGE SCALE ANALYSIS] AT SER-243 AND SER-245</scope>
    <scope>IDENTIFICATION BY MASS SPECTROMETRY [LARGE SCALE ANALYSIS]</scope>
    <source>
        <tissue>Cervix carcinoma</tissue>
    </source>
</reference>
<reference key="12">
    <citation type="journal article" date="2015" name="Hum. Mol. Genet.">
        <title>Non-syndromic retinitis pigmentosa due to mutations in the mucopolysaccharidosis type IIIC gene, heparan-alpha-glucosaminide N-acetyltransferase (HGSNAT).</title>
        <authorList>
            <person name="Haer-Wigman L."/>
            <person name="Newman H."/>
            <person name="Leibu R."/>
            <person name="Bax N.M."/>
            <person name="Baris H.N."/>
            <person name="Rizel L."/>
            <person name="Banin E."/>
            <person name="Massarweh A."/>
            <person name="Roosing S."/>
            <person name="Lefeber D.J."/>
            <person name="Zonneveld-Vrieling M.N."/>
            <person name="Isakov O."/>
            <person name="Shomron N."/>
            <person name="Sharon D."/>
            <person name="Den Hollander A.I."/>
            <person name="Hoyng C.B."/>
            <person name="Cremers F.P."/>
            <person name="Ben-Yosef T."/>
        </authorList>
    </citation>
    <scope>INVOLVEMENT IN RP73</scope>
    <scope>VARIANTS RP73 TRP-152; ALA-161 AND THR-643</scope>
    <scope>CHARACTERIZATION OF VARIANT RP73 THR-643</scope>
</reference>
<reference key="13">
    <citation type="journal article" date="2017" name="World J. Pediatr.">
        <title>Update of the spectrum of mucopolysaccharidoses type III in Tunisia: identification of three novel mutations and in silico structural analysis of the missense mutations.</title>
        <authorList>
            <person name="Ouesleti S."/>
            <person name="Coutinho M.F."/>
            <person name="Ribeiro I."/>
            <person name="Miled A."/>
            <person name="Mosbahi D.S."/>
            <person name="Alves S."/>
        </authorList>
    </citation>
    <scope>INVOLVEMENT IN MPS3C</scope>
</reference>
<reference key="14">
    <citation type="journal article" date="2006" name="Am. J. Hum. Genet.">
        <title>Mutations in TMEM76 cause mucopolysaccharidosis IIIC (Sanfilippo C syndrome).</title>
        <authorList>
            <person name="Hrebicek M."/>
            <person name="Mrazova L."/>
            <person name="Seyrantepe V."/>
            <person name="Durand S."/>
            <person name="Roslin N.M."/>
            <person name="Noskova L."/>
            <person name="Hartmannova H."/>
            <person name="Ivanek R."/>
            <person name="Cizkova A."/>
            <person name="Poupetova H."/>
            <person name="Sikora J."/>
            <person name="Urinovska J."/>
            <person name="Stranecky V."/>
            <person name="Zeman J."/>
            <person name="Lepage P."/>
            <person name="Roquis D."/>
            <person name="Verner A."/>
            <person name="Ausseil J."/>
            <person name="Beesley C.E."/>
            <person name="Maire I."/>
            <person name="Poorthuis B.J.H.M."/>
            <person name="van de Kamp J."/>
            <person name="van Diggelen O.P."/>
            <person name="Wevers R.A."/>
            <person name="Hudson T.J."/>
            <person name="Fujiwara T.M."/>
            <person name="Majewski J."/>
            <person name="Morgan K."/>
            <person name="Kmoch S."/>
            <person name="Pshezhetsky A.V."/>
        </authorList>
    </citation>
    <scope>VARIANTS MPS3C PHE-104; GLN-265; LEU-311; CYS-372; HIS-372; CYS-431; SER-452; LYS-499; LYS-510; GLN-551; LEU-569; VAL-590; LEU-599 AND THR-643</scope>
    <scope>FUNCTION</scope>
    <scope>SUBCELLULAR LOCATION</scope>
    <scope>TISSUE SPECIFICITY</scope>
</reference>
<reference key="15">
    <citation type="journal article" date="2007" name="Hum. Mutat.">
        <title>Mutational analysis of the HGSNAT gene in Italian patients with mucopolysaccharidosis IIIC (Sanfilippo C syndrome). Mutation in brief #959. Online.</title>
        <authorList>
            <person name="Fedele A.O."/>
            <person name="Filocamo M."/>
            <person name="Di Rocco M."/>
            <person name="Sersale G."/>
            <person name="Luebke T."/>
            <person name="di Natale P."/>
            <person name="Cosma M.P."/>
            <person name="Ballabio A."/>
        </authorList>
    </citation>
    <scope>VARIANTS MPS3C PRO-165; GLN-265 AND PHE-546</scope>
</reference>
<reference key="16">
    <citation type="journal article" date="2008" name="Mol. Genet. Metab.">
        <title>Clinical and genetic spectrum of Sanfilippo type C (MPS IIIC) disease in The Netherlands.</title>
        <authorList>
            <person name="Ruijter G.J.G."/>
            <person name="Valstar M.J."/>
            <person name="van de Kamp J.M."/>
            <person name="van der Helm R.M."/>
            <person name="Durand S."/>
            <person name="van Diggelen O.P."/>
            <person name="Wevers R.A."/>
            <person name="Poorthuis B.J."/>
            <person name="Pshezhetsky A.V."/>
            <person name="Wijburg F.A."/>
        </authorList>
    </citation>
    <scope>VARIANTS MPS3C PRO-165; GLN-265; ARG-280; LYS-301; CYS-372; LYS-499; PHE-546 AND CYS-567</scope>
</reference>
<reference key="17">
    <citation type="journal article" date="2009" name="Hum. Mutat.">
        <title>Sanfilippo syndrome type C: mutation spectrum in the heparan sulfate acetyl-CoA: alpha-glucosaminide N-acetyltransferase (HGSNAT) gene.</title>
        <authorList>
            <person name="Feldhammer M."/>
            <person name="Durand S."/>
            <person name="Mrazova L."/>
            <person name="Boucher R.-M."/>
            <person name="Laframboise R."/>
            <person name="Steinfeld R."/>
            <person name="Wraith J.E."/>
            <person name="Michelakakis H."/>
            <person name="van Diggelen O.P."/>
            <person name="Hrebicek M."/>
            <person name="Kmoch S."/>
            <person name="Pshezhetsky A.V."/>
        </authorList>
    </citation>
    <scope>VARIANTS MPS3C PRO-165; GLN-265; LEU-311; CYS-372; CYS-431; LYS-499; LEU-509; GLU-514; GLU-517; PHE-546; GLN-551; LEU-569 AND THR-643</scope>
    <scope>CHARACTERIZATION OF VARIANTS MPS3C GLN-265; CYS-431; LEU-509; GLN-551 AND THR-643</scope>
</reference>
<reference key="18">
    <citation type="journal article" date="2010" name="Hum. Mutat.">
        <title>Functional analysis of the HGSNAT gene in patients with mucopolysaccharidosis IIIC (Sanfilippo C Syndrome).</title>
        <authorList>
            <person name="Fedele A.O."/>
            <person name="Hopwood J.J."/>
        </authorList>
    </citation>
    <scope>CHARACTERIZATION OF VARIANTS MPS3C PHE-104; PRO-165; GLN-265; ARG-290; LEU-311; CYS-372; CYS-431; SER-452; LYS-499; LEU-509; LYS-510; GLU-514; GLU-517; PHE-546; GLN-551; CYS-567; LEU-569; VAL-590; LEU-599 AND THR-643</scope>
</reference>
<reference key="19">
    <citation type="journal article" date="2011" name="Clin. Genet.">
        <title>Molecular analysis of Sanfilippo syndrome type C in Spain: seven novel HGSNAT mutations and characterization of the mutant alleles.</title>
        <authorList>
            <person name="Canals I."/>
            <person name="Elalaoui S.C."/>
            <person name="Pineda M."/>
            <person name="Delgadillo V."/>
            <person name="Szlago M."/>
            <person name="Jaouad I.C."/>
            <person name="Sefiani A."/>
            <person name="Chabas A."/>
            <person name="Coll M.J."/>
            <person name="Grinberg D."/>
            <person name="Vilageliu L."/>
        </authorList>
    </citation>
    <scope>VARIANTS MPS3C VAL-82; PRO-141; VAL-452 AND PRO-473</scope>
    <scope>VARIANT GLN-265</scope>
    <scope>CHARACTERIZATION OF VARIANTS MPS3C VAL-82; PRO-141; CYS-372; VAL-452; PRO-473 AND PHE-546</scope>
    <scope>CHARACTERIZATION OF VARIANT GLN-265</scope>
</reference>
<organism>
    <name type="scientific">Homo sapiens</name>
    <name type="common">Human</name>
    <dbReference type="NCBI Taxonomy" id="9606"/>
    <lineage>
        <taxon>Eukaryota</taxon>
        <taxon>Metazoa</taxon>
        <taxon>Chordata</taxon>
        <taxon>Craniata</taxon>
        <taxon>Vertebrata</taxon>
        <taxon>Euteleostomi</taxon>
        <taxon>Mammalia</taxon>
        <taxon>Eutheria</taxon>
        <taxon>Euarchontoglires</taxon>
        <taxon>Primates</taxon>
        <taxon>Haplorrhini</taxon>
        <taxon>Catarrhini</taxon>
        <taxon>Hominidae</taxon>
        <taxon>Homo</taxon>
    </lineage>
</organism>
<gene>
    <name type="primary">HGSNAT</name>
    <name type="synonym">TMEM76</name>
</gene>
<evidence type="ECO:0000255" key="1"/>
<evidence type="ECO:0000256" key="2">
    <source>
        <dbReference type="SAM" id="MobiDB-lite"/>
    </source>
</evidence>
<evidence type="ECO:0000269" key="3">
    <source>
    </source>
</evidence>
<evidence type="ECO:0000269" key="4">
    <source>
    </source>
</evidence>
<evidence type="ECO:0000269" key="5">
    <source>
    </source>
</evidence>
<evidence type="ECO:0000269" key="6">
    <source>
    </source>
</evidence>
<evidence type="ECO:0000269" key="7">
    <source>
    </source>
</evidence>
<evidence type="ECO:0000269" key="8">
    <source>
    </source>
</evidence>
<evidence type="ECO:0000269" key="9">
    <source>
    </source>
</evidence>
<evidence type="ECO:0000269" key="10">
    <source>
    </source>
</evidence>
<evidence type="ECO:0000269" key="11">
    <source>
    </source>
</evidence>
<evidence type="ECO:0000269" key="12">
    <source>
    </source>
</evidence>
<evidence type="ECO:0000269" key="13">
    <source>
    </source>
</evidence>
<evidence type="ECO:0000269" key="14">
    <source>
    </source>
</evidence>
<evidence type="ECO:0000269" key="15">
    <source>
    </source>
</evidence>
<evidence type="ECO:0000303" key="16">
    <source>
    </source>
</evidence>
<evidence type="ECO:0000305" key="17"/>
<evidence type="ECO:0007744" key="18">
    <source>
    </source>
</evidence>
<evidence type="ECO:0007744" key="19">
    <source>
    </source>
</evidence>
<evidence type="ECO:0007829" key="20">
    <source>
        <dbReference type="PDB" id="8JL3"/>
    </source>
</evidence>
<evidence type="ECO:0007829" key="21">
    <source>
        <dbReference type="PDB" id="8TU9"/>
    </source>
</evidence>
<evidence type="ECO:0007829" key="22">
    <source>
        <dbReference type="PDB" id="8VLV"/>
    </source>
</evidence>
<evidence type="ECO:0007829" key="23">
    <source>
        <dbReference type="PDB" id="8W4A"/>
    </source>
</evidence>
<feature type="chain" id="PRO_0000273153" description="Heparan-alpha-glucosaminide N-acetyltransferase">
    <location>
        <begin position="1"/>
        <end position="663"/>
    </location>
</feature>
<feature type="topological domain" description="Lumenal, vesicle" evidence="1">
    <location>
        <begin position="1"/>
        <end position="190"/>
    </location>
</feature>
<feature type="transmembrane region" description="Helical" evidence="1">
    <location>
        <begin position="191"/>
        <end position="211"/>
    </location>
</feature>
<feature type="topological domain" description="Cytoplasmic" evidence="1">
    <location>
        <begin position="212"/>
        <end position="275"/>
    </location>
</feature>
<feature type="transmembrane region" description="Helical" evidence="1">
    <location>
        <begin position="276"/>
        <end position="296"/>
    </location>
</feature>
<feature type="topological domain" description="Lumenal, vesicle" evidence="1">
    <location>
        <begin position="297"/>
        <end position="302"/>
    </location>
</feature>
<feature type="transmembrane region" description="Helical" evidence="1">
    <location>
        <begin position="303"/>
        <end position="323"/>
    </location>
</feature>
<feature type="topological domain" description="Cytoplasmic" evidence="1">
    <location>
        <begin position="324"/>
        <end position="345"/>
    </location>
</feature>
<feature type="transmembrane region" description="Helical" evidence="1">
    <location>
        <begin position="346"/>
        <end position="366"/>
    </location>
</feature>
<feature type="topological domain" description="Lumenal, vesicle" evidence="1">
    <location>
        <begin position="367"/>
        <end position="374"/>
    </location>
</feature>
<feature type="transmembrane region" description="Helical" evidence="1">
    <location>
        <begin position="375"/>
        <end position="395"/>
    </location>
</feature>
<feature type="topological domain" description="Cytoplasmic" evidence="1">
    <location>
        <begin position="396"/>
        <end position="420"/>
    </location>
</feature>
<feature type="transmembrane region" description="Helical" evidence="1">
    <location>
        <begin position="421"/>
        <end position="441"/>
    </location>
</feature>
<feature type="topological domain" description="Lumenal, vesicle" evidence="1">
    <location>
        <begin position="442"/>
        <end position="500"/>
    </location>
</feature>
<feature type="transmembrane region" description="Helical" evidence="1">
    <location>
        <begin position="501"/>
        <end position="521"/>
    </location>
</feature>
<feature type="topological domain" description="Cytoplasmic" evidence="1">
    <location>
        <begin position="522"/>
        <end position="529"/>
    </location>
</feature>
<feature type="transmembrane region" description="Helical" evidence="1">
    <location>
        <begin position="530"/>
        <end position="550"/>
    </location>
</feature>
<feature type="topological domain" description="Lumenal, vesicle" evidence="1">
    <location>
        <begin position="551"/>
        <end position="564"/>
    </location>
</feature>
<feature type="transmembrane region" description="Helical" evidence="1">
    <location>
        <begin position="565"/>
        <end position="585"/>
    </location>
</feature>
<feature type="topological domain" description="Cytoplasmic" evidence="1">
    <location>
        <begin position="586"/>
        <end position="592"/>
    </location>
</feature>
<feature type="transmembrane region" description="Helical" evidence="1">
    <location>
        <begin position="593"/>
        <end position="613"/>
    </location>
</feature>
<feature type="topological domain" description="Lumenal, vesicle" evidence="1">
    <location>
        <begin position="614"/>
        <end position="634"/>
    </location>
</feature>
<feature type="transmembrane region" description="Helical" evidence="1">
    <location>
        <begin position="635"/>
        <end position="655"/>
    </location>
</feature>
<feature type="topological domain" description="Cytoplasmic" evidence="1">
    <location>
        <begin position="656"/>
        <end position="663"/>
    </location>
</feature>
<feature type="region of interest" description="Disordered" evidence="2">
    <location>
        <begin position="1"/>
        <end position="24"/>
    </location>
</feature>
<feature type="region of interest" description="Lysosomal targeting region">
    <location>
        <begin position="624"/>
        <end position="635"/>
    </location>
</feature>
<feature type="active site" evidence="12">
    <location>
        <position position="297"/>
    </location>
</feature>
<feature type="modified residue" description="Phosphoserine" evidence="19">
    <location>
        <position position="243"/>
    </location>
</feature>
<feature type="modified residue" description="Phosphoserine" evidence="18 19">
    <location>
        <position position="245"/>
    </location>
</feature>
<feature type="glycosylation site" description="N-linked (GlcNAc...) asparagine" evidence="1">
    <location>
        <position position="94"/>
    </location>
</feature>
<feature type="glycosylation site" description="N-linked (GlcNAc...) asparagine" evidence="8">
    <location>
        <position position="142"/>
    </location>
</feature>
<feature type="glycosylation site" description="N-linked (GlcNAc...) asparagine" evidence="1">
    <location>
        <position position="162"/>
    </location>
</feature>
<feature type="disulfide bond" evidence="17">
    <location>
        <begin position="151"/>
        <end position="462"/>
    </location>
</feature>
<feature type="splice variant" id="VSP_040504" description="In isoform 2." evidence="16">
    <location>
        <begin position="1"/>
        <end position="28"/>
    </location>
</feature>
<feature type="sequence variant" id="VAR_075812" description="In MPS3C; shows practically no enzyme activity." evidence="13">
    <original>A</original>
    <variation>V</variation>
    <location>
        <position position="82"/>
    </location>
</feature>
<feature type="sequence variant" id="VAR_063983" description="In MPS3C; results in a negligible amount of protein synthesis; very low enzyme activity; retained in the endoplasmic reticulum; loss of intralysosomal proteolytic cleavage." evidence="4 10 11 12">
    <original>C</original>
    <variation>F</variation>
    <location>
        <position position="104"/>
    </location>
</feature>
<feature type="sequence variant" id="VAR_075813" description="In MPS3C; shows practically no enzyme activity." evidence="13">
    <original>L</original>
    <variation>P</variation>
    <location>
        <position position="141"/>
    </location>
</feature>
<feature type="sequence variant" id="VAR_075814" description="In RP73." evidence="14">
    <original>R</original>
    <variation>W</variation>
    <location>
        <position position="152"/>
    </location>
</feature>
<feature type="sequence variant" id="VAR_075815" description="In RP73." evidence="14">
    <original>G</original>
    <variation>A</variation>
    <location>
        <position position="161"/>
    </location>
</feature>
<feature type="sequence variant" id="VAR_063984" description="In MPS3C; results in a negligible amount of protein synthesis; very low enzyme activity; retained in the endoplasmic reticulum." evidence="5 7 9 10 11">
    <original>L</original>
    <variation>P</variation>
    <location>
        <position position="165"/>
    </location>
</feature>
<feature type="sequence variant" id="VAR_063985" description="In MPS3C; likely benign; does not influence stability; does not influence activity; does not influence cellular localization of the enzyme." evidence="4 5 7 9 10 11 13">
    <original>P</original>
    <variation>Q</variation>
    <location>
        <position position="265"/>
    </location>
</feature>
<feature type="sequence variant" id="VAR_063986" description="In MPS3C." evidence="7">
    <original>I</original>
    <variation>R</variation>
    <location>
        <position position="280"/>
    </location>
</feature>
<feature type="sequence variant" id="VAR_063987" description="In MPS3C; results in a negligible amount of protein synthesis; very low enzyme activity; retained in the endoplasmic reticulum." evidence="7 10 11">
    <original>G</original>
    <variation>R</variation>
    <location>
        <position position="290"/>
    </location>
</feature>
<feature type="sequence variant" id="VAR_063988" description="In MPS3C; retained in the endoplasmic reticulum; loss of enzymatic activity." evidence="7 10">
    <original>N</original>
    <variation>K</variation>
    <location>
        <position position="301"/>
    </location>
</feature>
<feature type="sequence variant" id="VAR_030083" description="In MPS3C; results in a negligible amount of protein synthesis; very low enzyme activity; retained in the endoplasmic reticulum." evidence="4 9 10 11">
    <original>P</original>
    <variation>L</variation>
    <location>
        <position position="311"/>
    </location>
</feature>
<feature type="sequence variant" id="VAR_030084" description="In MPS3C; results in a negligible amount of protein synthesis; very low enzyme activity; retained in the endoplasmic reticulum." evidence="4 7 9 11">
    <original>R</original>
    <variation>C</variation>
    <location>
        <position position="372"/>
    </location>
</feature>
<feature type="sequence variant" id="VAR_063989" description="In MPS3C; retained in the endoplasmic reticulum; loss of enzymatic activity." evidence="4 10">
    <original>R</original>
    <variation>H</variation>
    <location>
        <position position="372"/>
    </location>
</feature>
<feature type="sequence variant" id="VAR_063990" description="In MPS3C; results in a negligible amount of protein synthesis; very low enzyme activity; retained in the endoplasmic reticulum." evidence="4 9 10 11">
    <original>W</original>
    <variation>C</variation>
    <location>
        <position position="431"/>
    </location>
</feature>
<feature type="sequence variant" id="VAR_030085" description="In MPS3C; results in a negligible amount of protein synthesis; very low enzyme activity; retained in the endoplasmic reticulum." evidence="4 10 11">
    <original>G</original>
    <variation>S</variation>
    <location>
        <position position="452"/>
    </location>
</feature>
<feature type="sequence variant" id="VAR_075816" description="In MPS3C; shows practically no enzyme activity." evidence="13">
    <original>G</original>
    <variation>V</variation>
    <location>
        <position position="452"/>
    </location>
</feature>
<feature type="sequence variant" id="VAR_075817" description="In MPS3C; shows practically no enzyme activity." evidence="13">
    <original>L</original>
    <variation>P</variation>
    <location>
        <position position="473"/>
    </location>
</feature>
<feature type="sequence variant" id="VAR_030086" description="In MPS3C; results in a negligible amount of protein synthesis; very low enzyme activity; retained in the endoplasmic reticulum." evidence="4 7 9 10 11">
    <original>E</original>
    <variation>K</variation>
    <location>
        <position position="499"/>
    </location>
</feature>
<feature type="sequence variant" id="VAR_063991" description="In MPS3C; likely benign; no loss of enzymatic activity." evidence="9 10 11">
    <original>V</original>
    <variation>L</variation>
    <location>
        <position position="509"/>
    </location>
</feature>
<feature type="sequence variant" id="VAR_030087" description="In MPS3C; results in a negligible amount of protein synthesis; very low enzyme activity; retained in the endoplasmic reticulum." evidence="4 10 11">
    <original>M</original>
    <variation>K</variation>
    <location>
        <position position="510"/>
    </location>
</feature>
<feature type="sequence variant" id="VAR_063992" description="In MPS3C; results in a negligible amount of protein synthesis; very low enzyme activity; retained in the endoplasmic reticulum." evidence="9 11">
    <original>G</original>
    <variation>E</variation>
    <location>
        <position position="514"/>
    </location>
</feature>
<feature type="sequence variant" id="VAR_063993" description="In MPS3C; results in a negligible amount of protein synthesis; very low enzyme activity; retained in the endoplasmic reticulum." evidence="9 10 11">
    <original>A</original>
    <variation>E</variation>
    <location>
        <position position="517"/>
    </location>
</feature>
<feature type="sequence variant" id="VAR_063994" description="In MPS3C; results in a negligible amount of protein synthesis; very low enzyme activity; retained in the endoplasmic reticulum." evidence="5 7 9 10 11 13">
    <original>S</original>
    <variation>F</variation>
    <location>
        <position position="546"/>
    </location>
</feature>
<feature type="sequence variant" id="VAR_063995" description="In MPS3C; likely benign; no loss of enzymatic activity; dbSNP:rs73569592." evidence="4 9 10 11">
    <original>K</original>
    <variation>Q</variation>
    <location>
        <position position="551"/>
    </location>
</feature>
<feature type="sequence variant" id="VAR_063996" description="In MPS3C; results in a negligible amount of protein synthesis; very low enzyme activity; retained in the endoplasmic reticulum." evidence="7 10 11">
    <original>S</original>
    <variation>C</variation>
    <location>
        <position position="567"/>
    </location>
</feature>
<feature type="sequence variant" id="VAR_030088" description="In MPS3C; results in a negligible amount of protein synthesis; very low enzyme activity." evidence="4 9 10 11">
    <original>S</original>
    <variation>L</variation>
    <location>
        <position position="569"/>
    </location>
</feature>
<feature type="sequence variant" id="VAR_030089" description="In MPS3C; results in a negligible amount of protein synthesis; very low enzyme activity." evidence="4 10 11">
    <original>D</original>
    <variation>V</variation>
    <location>
        <position position="590"/>
    </location>
</feature>
<feature type="sequence variant" id="VAR_030090" description="In MPS3C; results in a negligible amount of protein synthesis; very low enzyme activity." evidence="4 10 11">
    <original>P</original>
    <variation>L</variation>
    <location>
        <position position="599"/>
    </location>
</feature>
<feature type="sequence variant" id="VAR_063997" description="In RP73 and MPS3C; uncertain significance; may act as a modifier of disease severity in patients with retinitis pigmentosa; has a negligible effect on the enzyme expression; moderately reduced enzyme activity; dbSNP:rs112029032." evidence="4 9 10 11 14">
    <original>A</original>
    <variation>T</variation>
    <location>
        <position position="643"/>
    </location>
</feature>
<feature type="mutagenesis site" description="Loss of intralysosomal proteolytic cleavage and enzymatic activity. Reduced oligomer formation." evidence="12">
    <original>C</original>
    <variation>S</variation>
    <location>
        <position position="107"/>
    </location>
</feature>
<feature type="mutagenesis site" description="Loss of intralysosomal proteolytic cleavage and enzymatic activity. Reduced oligomer formation." evidence="12">
    <original>C</original>
    <variation>S</variation>
    <location>
        <position position="151"/>
    </location>
</feature>
<feature type="mutagenesis site" description="Loss of intralysosomal proteolytic cleavage and enzymatic activity." evidence="12">
    <original>C</original>
    <variation>S</variation>
    <location>
        <position position="179"/>
    </location>
</feature>
<feature type="mutagenesis site" description="Displayed both lysosomal and plasma membrane localization, reduced intralysosomal proteolytic cleavage and enzymatic activity; when associated with A-209." evidence="12">
    <original>L</original>
    <variation>A</variation>
    <location>
        <position position="236"/>
    </location>
</feature>
<feature type="mutagenesis site" description="Displayed both lysosomal and plasma membrane localization, reduced intralysosomal proteolytic cleavage and enzymatic activity; when associated with A-208." evidence="12">
    <original>I</original>
    <variation>A</variation>
    <location>
        <position position="237"/>
    </location>
</feature>
<feature type="mutagenesis site" description="Loss of enzymatic activity, but correctly targeted and processed." evidence="12">
    <original>H</original>
    <variation>A</variation>
    <location>
        <position position="297"/>
    </location>
</feature>
<feature type="mutagenesis site" description="No loss of intralysosomal proteolytic cleavage and enzymatic activity." evidence="12">
    <original>C</original>
    <variation>S</variation>
    <location>
        <position position="333"/>
    </location>
</feature>
<feature type="mutagenesis site" description="No loss of intralysosomal proteolytic cleavage and enzymatic activity." evidence="12">
    <original>C</original>
    <variation>S</variation>
    <location>
        <position position="402"/>
    </location>
</feature>
<feature type="mutagenesis site" description="Complete loss of intralysosomal proteolytic cleavage and enzymatic activity. Reduced oligomer formation." evidence="12">
    <original>C</original>
    <variation>S</variation>
    <location>
        <position position="462"/>
    </location>
</feature>
<feature type="mutagenesis site" description="Loss of intralysosomal proteolytic cleavage and enzymatic activity, retained in the endoplasmic reticulum." evidence="12">
    <original>H</original>
    <variation>A</variation>
    <location>
        <position position="479"/>
    </location>
</feature>
<feature type="mutagenesis site" description="Loss of intralysosomal proteolytic cleavage and enzymatic activity, retained in the endoplasmic reticulum." evidence="12">
    <original>H</original>
    <variation>A</variation>
    <location>
        <position position="633"/>
    </location>
</feature>
<feature type="mutagenesis site" description="Loss of intralysosomal proteolytic cleavage and enzymatic activity. Localized in the plasma membrane.">
    <location>
        <begin position="652"/>
        <end position="663"/>
    </location>
</feature>
<feature type="strand" evidence="20">
    <location>
        <begin position="81"/>
        <end position="88"/>
    </location>
</feature>
<feature type="strand" evidence="20">
    <location>
        <begin position="95"/>
        <end position="101"/>
    </location>
</feature>
<feature type="strand" evidence="20">
    <location>
        <begin position="110"/>
        <end position="115"/>
    </location>
</feature>
<feature type="strand" evidence="20">
    <location>
        <begin position="125"/>
        <end position="132"/>
    </location>
</feature>
<feature type="strand" evidence="20">
    <location>
        <begin position="137"/>
        <end position="143"/>
    </location>
</feature>
<feature type="turn" evidence="20">
    <location>
        <begin position="144"/>
        <end position="146"/>
    </location>
</feature>
<feature type="strand" evidence="20">
    <location>
        <begin position="149"/>
        <end position="155"/>
    </location>
</feature>
<feature type="strand" evidence="20">
    <location>
        <begin position="162"/>
        <end position="169"/>
    </location>
</feature>
<feature type="strand" evidence="23">
    <location>
        <begin position="172"/>
        <end position="174"/>
    </location>
</feature>
<feature type="strand" evidence="20">
    <location>
        <begin position="177"/>
        <end position="185"/>
    </location>
</feature>
<feature type="helix" evidence="20">
    <location>
        <begin position="192"/>
        <end position="214"/>
    </location>
</feature>
<feature type="helix" evidence="22">
    <location>
        <begin position="224"/>
        <end position="227"/>
    </location>
</feature>
<feature type="helix" evidence="20">
    <location>
        <begin position="269"/>
        <end position="286"/>
    </location>
</feature>
<feature type="helix" evidence="20">
    <location>
        <begin position="289"/>
        <end position="291"/>
    </location>
</feature>
<feature type="helix" evidence="20">
    <location>
        <begin position="293"/>
        <end position="295"/>
    </location>
</feature>
<feature type="strand" evidence="20">
    <location>
        <begin position="299"/>
        <end position="302"/>
    </location>
</feature>
<feature type="helix" evidence="20">
    <location>
        <begin position="305"/>
        <end position="307"/>
    </location>
</feature>
<feature type="helix" evidence="20">
    <location>
        <begin position="309"/>
        <end position="330"/>
    </location>
</feature>
<feature type="helix" evidence="20">
    <location>
        <begin position="335"/>
        <end position="355"/>
    </location>
</feature>
<feature type="turn" evidence="23">
    <location>
        <begin position="361"/>
        <end position="363"/>
    </location>
</feature>
<feature type="helix" evidence="20">
    <location>
        <begin position="368"/>
        <end position="370"/>
    </location>
</feature>
<feature type="helix" evidence="20">
    <location>
        <begin position="376"/>
        <end position="393"/>
    </location>
</feature>
<feature type="helix" evidence="20">
    <location>
        <begin position="412"/>
        <end position="415"/>
    </location>
</feature>
<feature type="helix" evidence="20">
    <location>
        <begin position="418"/>
        <end position="437"/>
    </location>
</feature>
<feature type="strand" evidence="21">
    <location>
        <begin position="441"/>
        <end position="443"/>
    </location>
</feature>
<feature type="turn" evidence="20">
    <location>
        <begin position="452"/>
        <end position="454"/>
    </location>
</feature>
<feature type="helix" evidence="20">
    <location>
        <begin position="455"/>
        <end position="457"/>
    </location>
</feature>
<feature type="strand" evidence="21">
    <location>
        <begin position="458"/>
        <end position="461"/>
    </location>
</feature>
<feature type="turn" evidence="20">
    <location>
        <begin position="463"/>
        <end position="465"/>
    </location>
</feature>
<feature type="helix" evidence="20">
    <location>
        <begin position="466"/>
        <end position="474"/>
    </location>
</feature>
<feature type="helix" evidence="20">
    <location>
        <begin position="477"/>
        <end position="479"/>
    </location>
</feature>
<feature type="helix" evidence="20">
    <location>
        <begin position="487"/>
        <end position="490"/>
    </location>
</feature>
<feature type="strand" evidence="21">
    <location>
        <begin position="498"/>
        <end position="503"/>
    </location>
</feature>
<feature type="helix" evidence="20">
    <location>
        <begin position="504"/>
        <end position="523"/>
    </location>
</feature>
<feature type="helix" evidence="20">
    <location>
        <begin position="528"/>
        <end position="550"/>
    </location>
</feature>
<feature type="strand" evidence="20">
    <location>
        <begin position="552"/>
        <end position="555"/>
    </location>
</feature>
<feature type="strand" evidence="20">
    <location>
        <begin position="557"/>
        <end position="559"/>
    </location>
</feature>
<feature type="turn" evidence="20">
    <location>
        <begin position="563"/>
        <end position="566"/>
    </location>
</feature>
<feature type="helix" evidence="20">
    <location>
        <begin position="568"/>
        <end position="589"/>
    </location>
</feature>
<feature type="turn" evidence="20">
    <location>
        <begin position="598"/>
        <end position="600"/>
    </location>
</feature>
<feature type="helix" evidence="20">
    <location>
        <begin position="601"/>
        <end position="604"/>
    </location>
</feature>
<feature type="helix" evidence="20">
    <location>
        <begin position="607"/>
        <end position="616"/>
    </location>
</feature>
<feature type="turn" evidence="20">
    <location>
        <begin position="617"/>
        <end position="619"/>
    </location>
</feature>
<feature type="turn" evidence="20">
    <location>
        <begin position="621"/>
        <end position="623"/>
    </location>
</feature>
<feature type="strand" evidence="22">
    <location>
        <begin position="628"/>
        <end position="631"/>
    </location>
</feature>
<feature type="helix" evidence="20">
    <location>
        <begin position="633"/>
        <end position="656"/>
    </location>
</feature>
<dbReference type="EC" id="2.3.1.78"/>
<dbReference type="EMBL" id="AK304441">
    <property type="protein sequence ID" value="BAG65262.1"/>
    <property type="molecule type" value="mRNA"/>
</dbReference>
<dbReference type="EMBL" id="AC113191">
    <property type="status" value="NOT_ANNOTATED_CDS"/>
    <property type="molecule type" value="Genomic_DNA"/>
</dbReference>
<dbReference type="EMBL" id="CR749838">
    <property type="protein sequence ID" value="CAH18694.1"/>
    <property type="molecule type" value="mRNA"/>
</dbReference>
<dbReference type="CCDS" id="CCDS47852.1">
    <molecule id="Q68CP4-2"/>
</dbReference>
<dbReference type="RefSeq" id="NP_689632.2">
    <molecule id="Q68CP4-2"/>
    <property type="nucleotide sequence ID" value="NM_152419.2"/>
</dbReference>
<dbReference type="PDB" id="8JKV">
    <property type="method" value="EM"/>
    <property type="resolution" value="2.87 A"/>
    <property type="chains" value="A/B=1-663"/>
</dbReference>
<dbReference type="PDB" id="8JL1">
    <property type="method" value="EM"/>
    <property type="resolution" value="2.80 A"/>
    <property type="chains" value="A/B=1-663"/>
</dbReference>
<dbReference type="PDB" id="8JL3">
    <property type="method" value="EM"/>
    <property type="resolution" value="2.59 A"/>
    <property type="chains" value="A/B=1-663"/>
</dbReference>
<dbReference type="PDB" id="8JL4">
    <property type="method" value="EM"/>
    <property type="resolution" value="2.68 A"/>
    <property type="chains" value="A/B=1-663"/>
</dbReference>
<dbReference type="PDB" id="8TU9">
    <property type="method" value="EM"/>
    <property type="resolution" value="3.26 A"/>
    <property type="chains" value="A/B=29-663"/>
</dbReference>
<dbReference type="PDB" id="8VKJ">
    <property type="method" value="EM"/>
    <property type="resolution" value="2.92 A"/>
    <property type="chains" value="A/B=1-663"/>
</dbReference>
<dbReference type="PDB" id="8VLG">
    <property type="method" value="EM"/>
    <property type="resolution" value="3.15 A"/>
    <property type="chains" value="A/B=1-663"/>
</dbReference>
<dbReference type="PDB" id="8VLI">
    <property type="method" value="EM"/>
    <property type="resolution" value="3.20 A"/>
    <property type="chains" value="A/B=1-663"/>
</dbReference>
<dbReference type="PDB" id="8VLU">
    <property type="method" value="EM"/>
    <property type="resolution" value="3.12 A"/>
    <property type="chains" value="A/B=1-663"/>
</dbReference>
<dbReference type="PDB" id="8VLV">
    <property type="method" value="EM"/>
    <property type="resolution" value="3.49 A"/>
    <property type="chains" value="A/B=1-663"/>
</dbReference>
<dbReference type="PDB" id="8VLY">
    <property type="method" value="EM"/>
    <property type="resolution" value="3.61 A"/>
    <property type="chains" value="A/B=1-663"/>
</dbReference>
<dbReference type="PDB" id="8W4A">
    <property type="method" value="EM"/>
    <property type="resolution" value="2.69 A"/>
    <property type="chains" value="A/B=1-663"/>
</dbReference>
<dbReference type="PDBsum" id="8JKV"/>
<dbReference type="PDBsum" id="8JL1"/>
<dbReference type="PDBsum" id="8JL3"/>
<dbReference type="PDBsum" id="8JL4"/>
<dbReference type="PDBsum" id="8TU9"/>
<dbReference type="PDBsum" id="8VKJ"/>
<dbReference type="PDBsum" id="8VLG"/>
<dbReference type="PDBsum" id="8VLI"/>
<dbReference type="PDBsum" id="8VLU"/>
<dbReference type="PDBsum" id="8VLV"/>
<dbReference type="PDBsum" id="8VLY"/>
<dbReference type="PDBsum" id="8W4A"/>
<dbReference type="EMDB" id="EMD-36376"/>
<dbReference type="EMDB" id="EMD-36386"/>
<dbReference type="EMDB" id="EMD-36387"/>
<dbReference type="EMDB" id="EMD-36388"/>
<dbReference type="EMDB" id="EMD-37264"/>
<dbReference type="EMDB" id="EMD-41620"/>
<dbReference type="EMDB" id="EMD-43319"/>
<dbReference type="EMDB" id="EMD-43338"/>
<dbReference type="EMDB" id="EMD-43339"/>
<dbReference type="EMDB" id="EMD-43344"/>
<dbReference type="EMDB" id="EMD-43345"/>
<dbReference type="EMDB" id="EMD-43348"/>
<dbReference type="SMR" id="Q68CP4"/>
<dbReference type="BioGRID" id="126499">
    <property type="interactions" value="10"/>
</dbReference>
<dbReference type="FunCoup" id="Q68CP4">
    <property type="interactions" value="677"/>
</dbReference>
<dbReference type="IntAct" id="Q68CP4">
    <property type="interactions" value="9"/>
</dbReference>
<dbReference type="MINT" id="Q68CP4"/>
<dbReference type="STRING" id="9606.ENSP00000368965"/>
<dbReference type="TCDB" id="9.B.169.4.1">
    <property type="family name" value="the integral membrane protein (8 -10 tmss) yeib or duf418 (yeib) family"/>
</dbReference>
<dbReference type="GlyConnect" id="1307">
    <property type="glycosylation" value="5 N-Linked glycans (2 sites)"/>
</dbReference>
<dbReference type="GlyCosmos" id="Q68CP4">
    <property type="glycosylation" value="4 sites, 5 glycans"/>
</dbReference>
<dbReference type="GlyGen" id="Q68CP4">
    <property type="glycosylation" value="6 sites, 19 N-linked glycans (3 sites), 1 O-linked glycan (1 site)"/>
</dbReference>
<dbReference type="iPTMnet" id="Q68CP4"/>
<dbReference type="PhosphoSitePlus" id="Q68CP4"/>
<dbReference type="SwissPalm" id="Q68CP4"/>
<dbReference type="BioMuta" id="HGSNAT"/>
<dbReference type="DMDM" id="124007195"/>
<dbReference type="jPOST" id="Q68CP4"/>
<dbReference type="MassIVE" id="Q68CP4"/>
<dbReference type="PaxDb" id="9606-ENSP00000368965"/>
<dbReference type="PeptideAtlas" id="Q68CP4"/>
<dbReference type="ProteomicsDB" id="66009">
    <molecule id="Q68CP4-1"/>
</dbReference>
<dbReference type="ProteomicsDB" id="66010">
    <molecule id="Q68CP4-2"/>
</dbReference>
<dbReference type="Pumba" id="Q68CP4"/>
<dbReference type="Antibodypedia" id="24209">
    <property type="antibodies" value="42 antibodies from 15 providers"/>
</dbReference>
<dbReference type="DNASU" id="138050"/>
<dbReference type="Ensembl" id="ENST00000379644.9">
    <molecule id="Q68CP4-2"/>
    <property type="protein sequence ID" value="ENSP00000368965.4"/>
    <property type="gene ID" value="ENSG00000165102.15"/>
</dbReference>
<dbReference type="GeneID" id="138050"/>
<dbReference type="KEGG" id="hsa:138050"/>
<dbReference type="MANE-Select" id="ENST00000379644.9">
    <molecule id="Q68CP4-2"/>
    <property type="protein sequence ID" value="ENSP00000368965.4"/>
    <property type="RefSeq nucleotide sequence ID" value="NM_152419.3"/>
    <property type="RefSeq protein sequence ID" value="NP_689632.2"/>
</dbReference>
<dbReference type="UCSC" id="uc003xpx.5">
    <molecule id="Q68CP4-1"/>
    <property type="organism name" value="human"/>
</dbReference>
<dbReference type="AGR" id="HGNC:26527"/>
<dbReference type="CTD" id="138050"/>
<dbReference type="DisGeNET" id="138050"/>
<dbReference type="GeneCards" id="HGSNAT"/>
<dbReference type="GeneReviews" id="HGSNAT"/>
<dbReference type="HGNC" id="HGNC:26527">
    <property type="gene designation" value="HGSNAT"/>
</dbReference>
<dbReference type="HPA" id="ENSG00000165102">
    <property type="expression patterns" value="Low tissue specificity"/>
</dbReference>
<dbReference type="MalaCards" id="HGSNAT"/>
<dbReference type="MIM" id="252930">
    <property type="type" value="phenotype"/>
</dbReference>
<dbReference type="MIM" id="610453">
    <property type="type" value="gene"/>
</dbReference>
<dbReference type="MIM" id="616544">
    <property type="type" value="phenotype"/>
</dbReference>
<dbReference type="neXtProt" id="NX_Q68CP4"/>
<dbReference type="OpenTargets" id="ENSG00000165102"/>
<dbReference type="Orphanet" id="791">
    <property type="disease" value="Retinitis pigmentosa"/>
</dbReference>
<dbReference type="Orphanet" id="79271">
    <property type="disease" value="Sanfilippo syndrome type C"/>
</dbReference>
<dbReference type="PharmGKB" id="PA162390851"/>
<dbReference type="VEuPathDB" id="HostDB:ENSG00000165102"/>
<dbReference type="eggNOG" id="KOG4683">
    <property type="taxonomic scope" value="Eukaryota"/>
</dbReference>
<dbReference type="GeneTree" id="ENSGT00390000001491"/>
<dbReference type="HOGENOM" id="CLU_029171_3_2_1"/>
<dbReference type="InParanoid" id="Q68CP4"/>
<dbReference type="OMA" id="CHQCLYQ"/>
<dbReference type="OrthoDB" id="2149840at2759"/>
<dbReference type="PAN-GO" id="Q68CP4">
    <property type="GO annotations" value="2 GO annotations based on evolutionary models"/>
</dbReference>
<dbReference type="PhylomeDB" id="Q68CP4"/>
<dbReference type="TreeFam" id="TF324790"/>
<dbReference type="BRENDA" id="2.3.1.78">
    <property type="organism ID" value="2681"/>
</dbReference>
<dbReference type="PathwayCommons" id="Q68CP4"/>
<dbReference type="Reactome" id="R-HSA-2024096">
    <property type="pathway name" value="HS-GAG degradation"/>
</dbReference>
<dbReference type="Reactome" id="R-HSA-2206291">
    <property type="pathway name" value="MPS IIIC - Sanfilippo syndrome C"/>
</dbReference>
<dbReference type="Reactome" id="R-HSA-6798695">
    <property type="pathway name" value="Neutrophil degranulation"/>
</dbReference>
<dbReference type="SABIO-RK" id="Q68CP4"/>
<dbReference type="SignaLink" id="Q68CP4"/>
<dbReference type="BioGRID-ORCS" id="138050">
    <property type="hits" value="12 hits in 1159 CRISPR screens"/>
</dbReference>
<dbReference type="ChiTaRS" id="HGSNAT">
    <property type="organism name" value="human"/>
</dbReference>
<dbReference type="GeneWiki" id="HGSNAT"/>
<dbReference type="GenomeRNAi" id="138050"/>
<dbReference type="Pharos" id="Q68CP4">
    <property type="development level" value="Tbio"/>
</dbReference>
<dbReference type="PRO" id="PR:Q68CP4"/>
<dbReference type="Proteomes" id="UP000005640">
    <property type="component" value="Chromosome 8"/>
</dbReference>
<dbReference type="RNAct" id="Q68CP4">
    <property type="molecule type" value="protein"/>
</dbReference>
<dbReference type="Bgee" id="ENSG00000165102">
    <property type="expression patterns" value="Expressed in mucosa of stomach and 200 other cell types or tissues"/>
</dbReference>
<dbReference type="ExpressionAtlas" id="Q68CP4">
    <property type="expression patterns" value="baseline and differential"/>
</dbReference>
<dbReference type="GO" id="GO:0043202">
    <property type="term" value="C:lysosomal lumen"/>
    <property type="evidence" value="ECO:0007669"/>
    <property type="project" value="Ensembl"/>
</dbReference>
<dbReference type="GO" id="GO:0005765">
    <property type="term" value="C:lysosomal membrane"/>
    <property type="evidence" value="ECO:0000314"/>
    <property type="project" value="UniProtKB"/>
</dbReference>
<dbReference type="GO" id="GO:0005886">
    <property type="term" value="C:plasma membrane"/>
    <property type="evidence" value="ECO:0000304"/>
    <property type="project" value="Reactome"/>
</dbReference>
<dbReference type="GO" id="GO:0035579">
    <property type="term" value="C:specific granule membrane"/>
    <property type="evidence" value="ECO:0000304"/>
    <property type="project" value="Reactome"/>
</dbReference>
<dbReference type="GO" id="GO:0070821">
    <property type="term" value="C:tertiary granule membrane"/>
    <property type="evidence" value="ECO:0000304"/>
    <property type="project" value="Reactome"/>
</dbReference>
<dbReference type="GO" id="GO:0016746">
    <property type="term" value="F:acyltransferase activity"/>
    <property type="evidence" value="ECO:0000314"/>
    <property type="project" value="UniProtKB"/>
</dbReference>
<dbReference type="GO" id="GO:0015019">
    <property type="term" value="F:heparan-alpha-glucosaminide N-acetyltransferase activity"/>
    <property type="evidence" value="ECO:0000304"/>
    <property type="project" value="Reactome"/>
</dbReference>
<dbReference type="GO" id="GO:0030200">
    <property type="term" value="P:heparan sulfate proteoglycan catabolic process"/>
    <property type="evidence" value="ECO:0007669"/>
    <property type="project" value="Ensembl"/>
</dbReference>
<dbReference type="GO" id="GO:0007041">
    <property type="term" value="P:lysosomal transport"/>
    <property type="evidence" value="ECO:0000314"/>
    <property type="project" value="UniProtKB"/>
</dbReference>
<dbReference type="GO" id="GO:0051259">
    <property type="term" value="P:protein complex oligomerization"/>
    <property type="evidence" value="ECO:0000314"/>
    <property type="project" value="UniProtKB"/>
</dbReference>
<dbReference type="InterPro" id="IPR012429">
    <property type="entry name" value="HGSNAT_cat"/>
</dbReference>
<dbReference type="PANTHER" id="PTHR31061:SF37">
    <property type="entry name" value="HEPARAN-ALPHA-GLUCOSAMINIDE N-ACETYLTRANSFERASE"/>
    <property type="match status" value="1"/>
</dbReference>
<dbReference type="PANTHER" id="PTHR31061">
    <property type="entry name" value="LD22376P"/>
    <property type="match status" value="1"/>
</dbReference>
<dbReference type="Pfam" id="PF07786">
    <property type="entry name" value="HGSNAT_cat"/>
    <property type="match status" value="1"/>
</dbReference>
<accession>Q68CP4</accession>
<accession>B4E2V0</accession>
<protein>
    <recommendedName>
        <fullName>Heparan-alpha-glucosaminide N-acetyltransferase</fullName>
        <ecNumber>2.3.1.78</ecNumber>
    </recommendedName>
    <alternativeName>
        <fullName>Transmembrane protein 76</fullName>
    </alternativeName>
</protein>
<comment type="function">
    <text evidence="3 4 10 12">Lysosomal acetyltransferase that acetylates the non-reducing terminal alpha-glucosamine residue of intralysosomal heparin or heparan sulfate, converting it into a substrate for luminal alpha-N-acetyl glucosaminidase.</text>
</comment>
<comment type="catalytic activity">
    <reaction evidence="3">
        <text>alpha-D-glucosaminyl-[heparan sulfate](n) + acetyl-CoA = N-acetyl-alpha-D-glucosaminyl-[heparan sulfate](n) + CoA + H(+)</text>
        <dbReference type="Rhea" id="RHEA:15125"/>
        <dbReference type="Rhea" id="RHEA-COMP:9830"/>
        <dbReference type="Rhea" id="RHEA-COMP:11585"/>
        <dbReference type="ChEBI" id="CHEBI:15378"/>
        <dbReference type="ChEBI" id="CHEBI:57287"/>
        <dbReference type="ChEBI" id="CHEBI:57288"/>
        <dbReference type="ChEBI" id="CHEBI:58388"/>
        <dbReference type="ChEBI" id="CHEBI:70974"/>
        <dbReference type="EC" id="2.3.1.78"/>
    </reaction>
</comment>
<comment type="subunit">
    <text evidence="12">Homooligomer. Homooligomerization is necessary for enzyme activity.</text>
</comment>
<comment type="subcellular location">
    <subcellularLocation>
        <location evidence="3 4 6">Lysosome membrane</location>
        <topology evidence="3 4 6">Multi-pass membrane protein</topology>
    </subcellularLocation>
    <text>Colocalizes with the lysosomal marker LAMP2. The signal peptide is not cleaved upon translocation into the endoplasmic reticulum; the precursor is probably targeted to the lysosomes via the adapter protein complex-mediated pathway that involves tyrosine- and/or dileucine-based conserved amino acid motifs in the last C-terminus 16-amino acid domain.</text>
</comment>
<comment type="alternative products">
    <event type="alternative initiation"/>
    <isoform>
        <id>Q68CP4-1</id>
        <name>1</name>
        <sequence type="displayed"/>
    </isoform>
    <isoform>
        <id>Q68CP4-2</id>
        <name>2</name>
        <sequence type="described" ref="VSP_040504"/>
    </isoform>
    <text>Isoform 1 and isoform 2 are correctly targeted to the lysosomal compartment and are functional enzymes.</text>
</comment>
<comment type="tissue specificity">
    <text evidence="3 4">Widely expressed, with highest level in leukocytes, heart, liver, skeletal muscle, lung, placenta and liver.</text>
</comment>
<comment type="PTM">
    <text>Undergoes intralysosomal proteolytic cleavage; occurs within the end of the first and/or the beginning of the second luminal domain and is essential for the activation of the enzyme.</text>
</comment>
<comment type="PTM">
    <text evidence="8 10">Glycosylated.</text>
</comment>
<comment type="disease" evidence="3 4 5 7 9 10 11 13 15">
    <disease id="DI-00776">
        <name>Mucopolysaccharidosis 3C</name>
        <acronym>MPS3C</acronym>
        <description>A form of mucopolysaccharidosis type 3, an autosomal recessive lysosomal storage disease due to impaired degradation of heparan sulfate. MPS3 is characterized by severe central nervous system degeneration, but only mild somatic disease. Onset of clinical features usually occurs between 2 and 6 years; severe neurologic degeneration occurs in most patients between 6 and 10 years of age, and death occurs typically during the second or third decade of life.</description>
        <dbReference type="MIM" id="252930"/>
    </disease>
    <text>The disease is caused by variants affecting the gene represented in this entry.</text>
</comment>
<comment type="disease" evidence="14">
    <disease id="DI-04519">
        <name>Retinitis pigmentosa 73</name>
        <acronym>RP73</acronym>
        <description>A retinal dystrophy belonging to the group of pigmentary retinopathies. Retinitis pigmentosa is characterized by retinal pigment deposits visible on fundus examination and primary loss of rod photoreceptor cells followed by secondary loss of cone photoreceptors. Patients typically have night vision blindness and loss of midperipheral visual field. As their condition progresses, they lose their far peripheral visual field and eventually central vision as well.</description>
        <dbReference type="MIM" id="616544"/>
    </disease>
    <text>The disease is caused by variants affecting the gene represented in this entry.</text>
</comment>
<comment type="miscellaneous">
    <text>A signal sequence is predicted but has been shown not to be cleaved in the endoplasmic reticulum.</text>
</comment>
<comment type="miscellaneous">
    <molecule>Isoform 1</molecule>
    <text>Intralysosomal proteolytic cleavage is faster and enzymatic activity higher than isoform 2.</text>
</comment>
<name>HGNAT_HUMAN</name>
<keyword id="KW-0002">3D-structure</keyword>
<keyword id="KW-0012">Acyltransferase</keyword>
<keyword id="KW-0024">Alternative initiation</keyword>
<keyword id="KW-0225">Disease variant</keyword>
<keyword id="KW-1015">Disulfide bond</keyword>
<keyword id="KW-0325">Glycoprotein</keyword>
<keyword id="KW-0458">Lysosome</keyword>
<keyword id="KW-0472">Membrane</keyword>
<keyword id="KW-0510">Mucopolysaccharidosis</keyword>
<keyword id="KW-0597">Phosphoprotein</keyword>
<keyword id="KW-1267">Proteomics identification</keyword>
<keyword id="KW-1185">Reference proteome</keyword>
<keyword id="KW-0682">Retinitis pigmentosa</keyword>
<keyword id="KW-0808">Transferase</keyword>
<keyword id="KW-0812">Transmembrane</keyword>
<keyword id="KW-1133">Transmembrane helix</keyword>